<comment type="function">
    <text evidence="2">RNA-binding protein that acts as a key regulator of N6-methyladenosine (m6A) methylation of RNAs, thereby regulating different processes, such as alternative splicing of mRNAs and X chromosome inactivation mediated by Xist RNA. Associated component of the WMM complex, a complex that mediates N6-methyladenosine (m6A) methylation of RNAs, a modification that plays a role in the efficiency of mRNA splicing and RNA processing. Plays a key role in m6A methylation, possibly by binding target RNAs and recruiting the WMM complex. Involved in random X inactivation mediated by Xist RNA: acts by binding Xist RNA and recruiting the WMM complex, which mediates m6A methylation, leading to target YTHDC1 reader on Xist RNA and promoting transcription repression activity of Xist. Functions in the regulation of alternative or illicit splicing, possibly by regulating m6A methylation. Inhibits pre-mRNA splicing. Also functions as a mRNA export factor by acting as a cofactor for the nuclear export receptor NXF1.</text>
</comment>
<comment type="subunit">
    <text evidence="2">Component of the WMM complex, a N6-methyltransferase complex composed of a catalytic subcomplex, named MAC, and of an associated subcomplex, named MACOM. The MAC subcomplex is composed of METTL3 and METTL14. The MACOM subcomplex is composed of WTAP, ZC3H13, CBLL1/HAKAI, VIRMA, and, in some cases of RBM15 (RBM15 or RBM15B). May interact with NCOR2. Interacts with NXF1, the interaction is required to promote mRNA export.</text>
</comment>
<comment type="subcellular location">
    <subcellularLocation>
        <location evidence="2">Nucleus</location>
        <location evidence="2">Nucleoplasm</location>
    </subcellularLocation>
    <subcellularLocation>
        <location evidence="2">Nucleus speckle</location>
    </subcellularLocation>
    <subcellularLocation>
        <location evidence="2">Nucleus envelope</location>
    </subcellularLocation>
    <text evidence="2">Colocalizes with BMLF1 in the nucleus. Localized in the nucleoplasm with a granular staining pattern and excluded from the nucleoli.</text>
</comment>
<comment type="similarity">
    <text evidence="7">Belongs to the RRM Spen family.</text>
</comment>
<comment type="sequence caution" evidence="7">
    <conflict type="miscellaneous discrepancy">
        <sequence resource="EMBL-CDS" id="AAH52180"/>
    </conflict>
    <text>Aberrant splicing.</text>
</comment>
<comment type="sequence caution" evidence="7">
    <conflict type="erroneous initiation">
        <sequence resource="EMBL-CDS" id="BAC35951"/>
    </conflict>
</comment>
<keyword id="KW-0002">3D-structure</keyword>
<keyword id="KW-1017">Isopeptide bond</keyword>
<keyword id="KW-0507">mRNA processing</keyword>
<keyword id="KW-0508">mRNA splicing</keyword>
<keyword id="KW-0539">Nucleus</keyword>
<keyword id="KW-0597">Phosphoprotein</keyword>
<keyword id="KW-1185">Reference proteome</keyword>
<keyword id="KW-0677">Repeat</keyword>
<keyword id="KW-0694">RNA-binding</keyword>
<keyword id="KW-0804">Transcription</keyword>
<keyword id="KW-0805">Transcription regulation</keyword>
<keyword id="KW-0832">Ubl conjugation</keyword>
<reference key="1">
    <citation type="journal article" date="2009" name="PLoS Biol.">
        <title>Lineage-specific biology revealed by a finished genome assembly of the mouse.</title>
        <authorList>
            <person name="Church D.M."/>
            <person name="Goodstadt L."/>
            <person name="Hillier L.W."/>
            <person name="Zody M.C."/>
            <person name="Goldstein S."/>
            <person name="She X."/>
            <person name="Bult C.J."/>
            <person name="Agarwala R."/>
            <person name="Cherry J.L."/>
            <person name="DiCuccio M."/>
            <person name="Hlavina W."/>
            <person name="Kapustin Y."/>
            <person name="Meric P."/>
            <person name="Maglott D."/>
            <person name="Birtle Z."/>
            <person name="Marques A.C."/>
            <person name="Graves T."/>
            <person name="Zhou S."/>
            <person name="Teague B."/>
            <person name="Potamousis K."/>
            <person name="Churas C."/>
            <person name="Place M."/>
            <person name="Herschleb J."/>
            <person name="Runnheim R."/>
            <person name="Forrest D."/>
            <person name="Amos-Landgraf J."/>
            <person name="Schwartz D.C."/>
            <person name="Cheng Z."/>
            <person name="Lindblad-Toh K."/>
            <person name="Eichler E.E."/>
            <person name="Ponting C.P."/>
        </authorList>
    </citation>
    <scope>NUCLEOTIDE SEQUENCE [LARGE SCALE GENOMIC DNA]</scope>
    <source>
        <strain>C57BL/6J</strain>
    </source>
</reference>
<reference key="2">
    <citation type="journal article" date="2004" name="Genome Res.">
        <title>The status, quality, and expansion of the NIH full-length cDNA project: the Mammalian Gene Collection (MGC).</title>
        <authorList>
            <consortium name="The MGC Project Team"/>
        </authorList>
    </citation>
    <scope>NUCLEOTIDE SEQUENCE [LARGE SCALE MRNA] OF 311-887</scope>
    <source>
        <tissue>Embryo</tissue>
    </source>
</reference>
<reference key="3">
    <citation type="journal article" date="2005" name="Science">
        <title>The transcriptional landscape of the mammalian genome.</title>
        <authorList>
            <person name="Carninci P."/>
            <person name="Kasukawa T."/>
            <person name="Katayama S."/>
            <person name="Gough J."/>
            <person name="Frith M.C."/>
            <person name="Maeda N."/>
            <person name="Oyama R."/>
            <person name="Ravasi T."/>
            <person name="Lenhard B."/>
            <person name="Wells C."/>
            <person name="Kodzius R."/>
            <person name="Shimokawa K."/>
            <person name="Bajic V.B."/>
            <person name="Brenner S.E."/>
            <person name="Batalov S."/>
            <person name="Forrest A.R."/>
            <person name="Zavolan M."/>
            <person name="Davis M.J."/>
            <person name="Wilming L.G."/>
            <person name="Aidinis V."/>
            <person name="Allen J.E."/>
            <person name="Ambesi-Impiombato A."/>
            <person name="Apweiler R."/>
            <person name="Aturaliya R.N."/>
            <person name="Bailey T.L."/>
            <person name="Bansal M."/>
            <person name="Baxter L."/>
            <person name="Beisel K.W."/>
            <person name="Bersano T."/>
            <person name="Bono H."/>
            <person name="Chalk A.M."/>
            <person name="Chiu K.P."/>
            <person name="Choudhary V."/>
            <person name="Christoffels A."/>
            <person name="Clutterbuck D.R."/>
            <person name="Crowe M.L."/>
            <person name="Dalla E."/>
            <person name="Dalrymple B.P."/>
            <person name="de Bono B."/>
            <person name="Della Gatta G."/>
            <person name="di Bernardo D."/>
            <person name="Down T."/>
            <person name="Engstrom P."/>
            <person name="Fagiolini M."/>
            <person name="Faulkner G."/>
            <person name="Fletcher C.F."/>
            <person name="Fukushima T."/>
            <person name="Furuno M."/>
            <person name="Futaki S."/>
            <person name="Gariboldi M."/>
            <person name="Georgii-Hemming P."/>
            <person name="Gingeras T.R."/>
            <person name="Gojobori T."/>
            <person name="Green R.E."/>
            <person name="Gustincich S."/>
            <person name="Harbers M."/>
            <person name="Hayashi Y."/>
            <person name="Hensch T.K."/>
            <person name="Hirokawa N."/>
            <person name="Hill D."/>
            <person name="Huminiecki L."/>
            <person name="Iacono M."/>
            <person name="Ikeo K."/>
            <person name="Iwama A."/>
            <person name="Ishikawa T."/>
            <person name="Jakt M."/>
            <person name="Kanapin A."/>
            <person name="Katoh M."/>
            <person name="Kawasawa Y."/>
            <person name="Kelso J."/>
            <person name="Kitamura H."/>
            <person name="Kitano H."/>
            <person name="Kollias G."/>
            <person name="Krishnan S.P."/>
            <person name="Kruger A."/>
            <person name="Kummerfeld S.K."/>
            <person name="Kurochkin I.V."/>
            <person name="Lareau L.F."/>
            <person name="Lazarevic D."/>
            <person name="Lipovich L."/>
            <person name="Liu J."/>
            <person name="Liuni S."/>
            <person name="McWilliam S."/>
            <person name="Madan Babu M."/>
            <person name="Madera M."/>
            <person name="Marchionni L."/>
            <person name="Matsuda H."/>
            <person name="Matsuzawa S."/>
            <person name="Miki H."/>
            <person name="Mignone F."/>
            <person name="Miyake S."/>
            <person name="Morris K."/>
            <person name="Mottagui-Tabar S."/>
            <person name="Mulder N."/>
            <person name="Nakano N."/>
            <person name="Nakauchi H."/>
            <person name="Ng P."/>
            <person name="Nilsson R."/>
            <person name="Nishiguchi S."/>
            <person name="Nishikawa S."/>
            <person name="Nori F."/>
            <person name="Ohara O."/>
            <person name="Okazaki Y."/>
            <person name="Orlando V."/>
            <person name="Pang K.C."/>
            <person name="Pavan W.J."/>
            <person name="Pavesi G."/>
            <person name="Pesole G."/>
            <person name="Petrovsky N."/>
            <person name="Piazza S."/>
            <person name="Reed J."/>
            <person name="Reid J.F."/>
            <person name="Ring B.Z."/>
            <person name="Ringwald M."/>
            <person name="Rost B."/>
            <person name="Ruan Y."/>
            <person name="Salzberg S.L."/>
            <person name="Sandelin A."/>
            <person name="Schneider C."/>
            <person name="Schoenbach C."/>
            <person name="Sekiguchi K."/>
            <person name="Semple C.A."/>
            <person name="Seno S."/>
            <person name="Sessa L."/>
            <person name="Sheng Y."/>
            <person name="Shibata Y."/>
            <person name="Shimada H."/>
            <person name="Shimada K."/>
            <person name="Silva D."/>
            <person name="Sinclair B."/>
            <person name="Sperling S."/>
            <person name="Stupka E."/>
            <person name="Sugiura K."/>
            <person name="Sultana R."/>
            <person name="Takenaka Y."/>
            <person name="Taki K."/>
            <person name="Tammoja K."/>
            <person name="Tan S.L."/>
            <person name="Tang S."/>
            <person name="Taylor M.S."/>
            <person name="Tegner J."/>
            <person name="Teichmann S.A."/>
            <person name="Ueda H.R."/>
            <person name="van Nimwegen E."/>
            <person name="Verardo R."/>
            <person name="Wei C.L."/>
            <person name="Yagi K."/>
            <person name="Yamanishi H."/>
            <person name="Zabarovsky E."/>
            <person name="Zhu S."/>
            <person name="Zimmer A."/>
            <person name="Hide W."/>
            <person name="Bult C."/>
            <person name="Grimmond S.M."/>
            <person name="Teasdale R.D."/>
            <person name="Liu E.T."/>
            <person name="Brusic V."/>
            <person name="Quackenbush J."/>
            <person name="Wahlestedt C."/>
            <person name="Mattick J.S."/>
            <person name="Hume D.A."/>
            <person name="Kai C."/>
            <person name="Sasaki D."/>
            <person name="Tomaru Y."/>
            <person name="Fukuda S."/>
            <person name="Kanamori-Katayama M."/>
            <person name="Suzuki M."/>
            <person name="Aoki J."/>
            <person name="Arakawa T."/>
            <person name="Iida J."/>
            <person name="Imamura K."/>
            <person name="Itoh M."/>
            <person name="Kato T."/>
            <person name="Kawaji H."/>
            <person name="Kawagashira N."/>
            <person name="Kawashima T."/>
            <person name="Kojima M."/>
            <person name="Kondo S."/>
            <person name="Konno H."/>
            <person name="Nakano K."/>
            <person name="Ninomiya N."/>
            <person name="Nishio T."/>
            <person name="Okada M."/>
            <person name="Plessy C."/>
            <person name="Shibata K."/>
            <person name="Shiraki T."/>
            <person name="Suzuki S."/>
            <person name="Tagami M."/>
            <person name="Waki K."/>
            <person name="Watahiki A."/>
            <person name="Okamura-Oho Y."/>
            <person name="Suzuki H."/>
            <person name="Kawai J."/>
            <person name="Hayashizaki Y."/>
        </authorList>
    </citation>
    <scope>NUCLEOTIDE SEQUENCE [LARGE SCALE MRNA] OF 343-887</scope>
    <source>
        <strain>C57BL/6J</strain>
        <tissue>Pancreas</tissue>
    </source>
</reference>
<reference key="4">
    <citation type="journal article" date="2010" name="Cell">
        <title>A tissue-specific atlas of mouse protein phosphorylation and expression.</title>
        <authorList>
            <person name="Huttlin E.L."/>
            <person name="Jedrychowski M.P."/>
            <person name="Elias J.E."/>
            <person name="Goswami T."/>
            <person name="Rad R."/>
            <person name="Beausoleil S.A."/>
            <person name="Villen J."/>
            <person name="Haas W."/>
            <person name="Sowa M.E."/>
            <person name="Gygi S.P."/>
        </authorList>
    </citation>
    <scope>PHOSPHORYLATION [LARGE SCALE ANALYSIS] AT SER-107; SER-111 AND SER-261</scope>
    <scope>IDENTIFICATION BY MASS SPECTROMETRY [LARGE SCALE ANALYSIS]</scope>
    <source>
        <tissue>Brain</tissue>
        <tissue>Kidney</tissue>
        <tissue>Pancreas</tissue>
        <tissue>Spleen</tissue>
        <tissue>Testis</tissue>
    </source>
</reference>
<reference key="5">
    <citation type="submission" date="2004-11" db="PDB data bank">
        <title>Solution structure of the RNA recognition motif from hypothetical RNA binding protein BC052180.</title>
        <authorList>
            <consortium name="RIKEN structural genomics initiative (RSGI)"/>
        </authorList>
    </citation>
    <scope>STRUCTURE BY NMR OF 404-487</scope>
</reference>
<dbReference type="EMBL" id="AC147636">
    <property type="status" value="NOT_ANNOTATED_CDS"/>
    <property type="molecule type" value="Genomic_DNA"/>
</dbReference>
<dbReference type="EMBL" id="BC052180">
    <property type="protein sequence ID" value="AAH52180.1"/>
    <property type="status" value="ALT_SEQ"/>
    <property type="molecule type" value="mRNA"/>
</dbReference>
<dbReference type="EMBL" id="AK075777">
    <property type="protein sequence ID" value="BAC35951.1"/>
    <property type="status" value="ALT_INIT"/>
    <property type="molecule type" value="mRNA"/>
</dbReference>
<dbReference type="CCDS" id="CCDS52915.1"/>
<dbReference type="RefSeq" id="NP_780611.3">
    <property type="nucleotide sequence ID" value="NM_175402.4"/>
</dbReference>
<dbReference type="PDB" id="1WHY">
    <property type="method" value="NMR"/>
    <property type="chains" value="A=404-487"/>
</dbReference>
<dbReference type="PDBsum" id="1WHY"/>
<dbReference type="SMR" id="Q6PHZ5"/>
<dbReference type="BioGRID" id="224554">
    <property type="interactions" value="3"/>
</dbReference>
<dbReference type="FunCoup" id="Q6PHZ5">
    <property type="interactions" value="4437"/>
</dbReference>
<dbReference type="STRING" id="10090.ENSMUSP00000059330"/>
<dbReference type="GlyGen" id="Q6PHZ5">
    <property type="glycosylation" value="1 site"/>
</dbReference>
<dbReference type="iPTMnet" id="Q6PHZ5"/>
<dbReference type="PhosphoSitePlus" id="Q6PHZ5"/>
<dbReference type="jPOST" id="Q6PHZ5"/>
<dbReference type="PaxDb" id="10090-ENSMUSP00000059330"/>
<dbReference type="PeptideAtlas" id="Q6PHZ5"/>
<dbReference type="ProteomicsDB" id="300309"/>
<dbReference type="Pumba" id="Q6PHZ5"/>
<dbReference type="Antibodypedia" id="59712">
    <property type="antibodies" value="54 antibodies from 19 providers"/>
</dbReference>
<dbReference type="DNASU" id="109095"/>
<dbReference type="Ensembl" id="ENSMUST00000055843.9">
    <property type="protein sequence ID" value="ENSMUSP00000059330.8"/>
    <property type="gene ID" value="ENSMUSG00000074102.5"/>
</dbReference>
<dbReference type="GeneID" id="109095"/>
<dbReference type="KEGG" id="mmu:109095"/>
<dbReference type="UCSC" id="uc012gzz.1">
    <property type="organism name" value="mouse"/>
</dbReference>
<dbReference type="AGR" id="MGI:1923598"/>
<dbReference type="CTD" id="29890"/>
<dbReference type="MGI" id="MGI:1923598">
    <property type="gene designation" value="Rbm15b"/>
</dbReference>
<dbReference type="VEuPathDB" id="HostDB:ENSMUSG00000074102"/>
<dbReference type="eggNOG" id="KOG0112">
    <property type="taxonomic scope" value="Eukaryota"/>
</dbReference>
<dbReference type="GeneTree" id="ENSGT00940000160561"/>
<dbReference type="HOGENOM" id="CLU_012724_1_0_1"/>
<dbReference type="InParanoid" id="Q6PHZ5"/>
<dbReference type="OMA" id="GLFRQFQ"/>
<dbReference type="OrthoDB" id="10050565at2759"/>
<dbReference type="PhylomeDB" id="Q6PHZ5"/>
<dbReference type="TreeFam" id="TF354224"/>
<dbReference type="BioGRID-ORCS" id="109095">
    <property type="hits" value="4 hits in 77 CRISPR screens"/>
</dbReference>
<dbReference type="ChiTaRS" id="Rbm15b">
    <property type="organism name" value="mouse"/>
</dbReference>
<dbReference type="EvolutionaryTrace" id="Q6PHZ5"/>
<dbReference type="PRO" id="PR:Q6PHZ5"/>
<dbReference type="Proteomes" id="UP000000589">
    <property type="component" value="Chromosome 9"/>
</dbReference>
<dbReference type="RNAct" id="Q6PHZ5">
    <property type="molecule type" value="protein"/>
</dbReference>
<dbReference type="Bgee" id="ENSMUSG00000074102">
    <property type="expression patterns" value="Expressed in ventricular zone and 238 other cell types or tissues"/>
</dbReference>
<dbReference type="ExpressionAtlas" id="Q6PHZ5">
    <property type="expression patterns" value="baseline and differential"/>
</dbReference>
<dbReference type="GO" id="GO:0005635">
    <property type="term" value="C:nuclear envelope"/>
    <property type="evidence" value="ECO:0000314"/>
    <property type="project" value="UniProtKB"/>
</dbReference>
<dbReference type="GO" id="GO:0016607">
    <property type="term" value="C:nuclear speck"/>
    <property type="evidence" value="ECO:0000314"/>
    <property type="project" value="UniProtKB"/>
</dbReference>
<dbReference type="GO" id="GO:0036396">
    <property type="term" value="C:RNA N6-methyladenosine methyltransferase complex"/>
    <property type="evidence" value="ECO:0000250"/>
    <property type="project" value="UniProtKB"/>
</dbReference>
<dbReference type="GO" id="GO:0003723">
    <property type="term" value="F:RNA binding"/>
    <property type="evidence" value="ECO:0000250"/>
    <property type="project" value="UniProtKB"/>
</dbReference>
<dbReference type="GO" id="GO:0009048">
    <property type="term" value="P:dosage compensation by inactivation of X chromosome"/>
    <property type="evidence" value="ECO:0000250"/>
    <property type="project" value="UniProtKB"/>
</dbReference>
<dbReference type="GO" id="GO:0006406">
    <property type="term" value="P:mRNA export from nucleus"/>
    <property type="evidence" value="ECO:0000314"/>
    <property type="project" value="UniProtKB"/>
</dbReference>
<dbReference type="GO" id="GO:0006397">
    <property type="term" value="P:mRNA processing"/>
    <property type="evidence" value="ECO:0007669"/>
    <property type="project" value="UniProtKB-KW"/>
</dbReference>
<dbReference type="GO" id="GO:0000381">
    <property type="term" value="P:regulation of alternative mRNA splicing, via spliceosome"/>
    <property type="evidence" value="ECO:0000250"/>
    <property type="project" value="UniProtKB"/>
</dbReference>
<dbReference type="GO" id="GO:0001510">
    <property type="term" value="P:RNA methylation"/>
    <property type="evidence" value="ECO:0000250"/>
    <property type="project" value="UniProtKB"/>
</dbReference>
<dbReference type="GO" id="GO:0008380">
    <property type="term" value="P:RNA splicing"/>
    <property type="evidence" value="ECO:0007669"/>
    <property type="project" value="UniProtKB-KW"/>
</dbReference>
<dbReference type="CDD" id="cd12554">
    <property type="entry name" value="RRM1_RBM15B"/>
    <property type="match status" value="1"/>
</dbReference>
<dbReference type="CDD" id="cd12556">
    <property type="entry name" value="RRM2_RBM15B"/>
    <property type="match status" value="1"/>
</dbReference>
<dbReference type="CDD" id="cd12558">
    <property type="entry name" value="RRM3_RBM15B"/>
    <property type="match status" value="1"/>
</dbReference>
<dbReference type="CDD" id="cd21550">
    <property type="entry name" value="SPOC_RBM15B"/>
    <property type="match status" value="1"/>
</dbReference>
<dbReference type="FunFam" id="3.30.70.330:FF:000195">
    <property type="entry name" value="RNA binding motif protein 15"/>
    <property type="match status" value="1"/>
</dbReference>
<dbReference type="FunFam" id="2.40.290.10:FF:000003">
    <property type="entry name" value="RNA-binding motif protein 15"/>
    <property type="match status" value="1"/>
</dbReference>
<dbReference type="FunFam" id="3.30.70.330:FF:000360">
    <property type="entry name" value="RNA-binding motif protein 15B"/>
    <property type="match status" value="1"/>
</dbReference>
<dbReference type="Gene3D" id="2.40.290.10">
    <property type="match status" value="1"/>
</dbReference>
<dbReference type="Gene3D" id="3.30.70.330">
    <property type="match status" value="3"/>
</dbReference>
<dbReference type="InterPro" id="IPR012677">
    <property type="entry name" value="Nucleotide-bd_a/b_plait_sf"/>
</dbReference>
<dbReference type="InterPro" id="IPR035979">
    <property type="entry name" value="RBD_domain_sf"/>
</dbReference>
<dbReference type="InterPro" id="IPR034475">
    <property type="entry name" value="RBM15B_RRM1"/>
</dbReference>
<dbReference type="InterPro" id="IPR034535">
    <property type="entry name" value="RBM15B_RRM2"/>
</dbReference>
<dbReference type="InterPro" id="IPR034536">
    <property type="entry name" value="RBM15B_RRM3"/>
</dbReference>
<dbReference type="InterPro" id="IPR000504">
    <property type="entry name" value="RRM_dom"/>
</dbReference>
<dbReference type="InterPro" id="IPR016194">
    <property type="entry name" value="SPOC-like_C_dom_sf"/>
</dbReference>
<dbReference type="InterPro" id="IPR012921">
    <property type="entry name" value="SPOC_C"/>
</dbReference>
<dbReference type="InterPro" id="IPR010912">
    <property type="entry name" value="SPOC_met"/>
</dbReference>
<dbReference type="PANTHER" id="PTHR23189">
    <property type="entry name" value="RNA RECOGNITION MOTIF-CONTAINING"/>
    <property type="match status" value="1"/>
</dbReference>
<dbReference type="Pfam" id="PF00076">
    <property type="entry name" value="RRM_1"/>
    <property type="match status" value="2"/>
</dbReference>
<dbReference type="Pfam" id="PF07744">
    <property type="entry name" value="SPOC"/>
    <property type="match status" value="1"/>
</dbReference>
<dbReference type="SMART" id="SM00360">
    <property type="entry name" value="RRM"/>
    <property type="match status" value="3"/>
</dbReference>
<dbReference type="SUPFAM" id="SSF54928">
    <property type="entry name" value="RNA-binding domain, RBD"/>
    <property type="match status" value="2"/>
</dbReference>
<dbReference type="SUPFAM" id="SSF100939">
    <property type="entry name" value="SPOC domain-like"/>
    <property type="match status" value="1"/>
</dbReference>
<dbReference type="PROSITE" id="PS50102">
    <property type="entry name" value="RRM"/>
    <property type="match status" value="3"/>
</dbReference>
<dbReference type="PROSITE" id="PS50917">
    <property type="entry name" value="SPOC"/>
    <property type="match status" value="1"/>
</dbReference>
<accession>Q6PHZ5</accession>
<accession>Q8C6G2</accession>
<name>RB15B_MOUSE</name>
<feature type="chain" id="PRO_0000081779" description="Putative RNA-binding protein 15B">
    <location>
        <begin position="1"/>
        <end position="887"/>
    </location>
</feature>
<feature type="domain" description="RRM 1" evidence="4">
    <location>
        <begin position="136"/>
        <end position="216"/>
    </location>
</feature>
<feature type="domain" description="RRM 2" evidence="4">
    <location>
        <begin position="333"/>
        <end position="410"/>
    </location>
</feature>
<feature type="domain" description="RRM 3" evidence="4">
    <location>
        <begin position="414"/>
        <end position="488"/>
    </location>
</feature>
<feature type="domain" description="SPOC" evidence="5">
    <location>
        <begin position="708"/>
        <end position="886"/>
    </location>
</feature>
<feature type="region of interest" description="Disordered" evidence="6">
    <location>
        <begin position="1"/>
        <end position="132"/>
    </location>
</feature>
<feature type="region of interest" description="Disordered" evidence="6">
    <location>
        <begin position="215"/>
        <end position="249"/>
    </location>
</feature>
<feature type="region of interest" description="Disordered" evidence="6">
    <location>
        <begin position="549"/>
        <end position="703"/>
    </location>
</feature>
<feature type="region of interest" description="Interaction with Epstein-Barr virus BMLF1" evidence="1">
    <location>
        <begin position="719"/>
        <end position="887"/>
    </location>
</feature>
<feature type="short sequence motif" description="Nuclear localization signal" evidence="3">
    <location>
        <begin position="590"/>
        <end position="594"/>
    </location>
</feature>
<feature type="compositionally biased region" description="Low complexity" evidence="6">
    <location>
        <begin position="10"/>
        <end position="20"/>
    </location>
</feature>
<feature type="compositionally biased region" description="Basic and acidic residues" evidence="6">
    <location>
        <begin position="22"/>
        <end position="34"/>
    </location>
</feature>
<feature type="compositionally biased region" description="Basic and acidic residues" evidence="6">
    <location>
        <begin position="65"/>
        <end position="77"/>
    </location>
</feature>
<feature type="compositionally biased region" description="Gly residues" evidence="6">
    <location>
        <begin position="83"/>
        <end position="94"/>
    </location>
</feature>
<feature type="compositionally biased region" description="Low complexity" evidence="6">
    <location>
        <begin position="95"/>
        <end position="110"/>
    </location>
</feature>
<feature type="compositionally biased region" description="Pro residues" evidence="6">
    <location>
        <begin position="111"/>
        <end position="122"/>
    </location>
</feature>
<feature type="compositionally biased region" description="Low complexity" evidence="6">
    <location>
        <begin position="123"/>
        <end position="132"/>
    </location>
</feature>
<feature type="compositionally biased region" description="Low complexity" evidence="6">
    <location>
        <begin position="222"/>
        <end position="233"/>
    </location>
</feature>
<feature type="compositionally biased region" description="Pro residues" evidence="6">
    <location>
        <begin position="234"/>
        <end position="243"/>
    </location>
</feature>
<feature type="compositionally biased region" description="Basic and acidic residues" evidence="6">
    <location>
        <begin position="570"/>
        <end position="613"/>
    </location>
</feature>
<feature type="compositionally biased region" description="Basic and acidic residues" evidence="6">
    <location>
        <begin position="623"/>
        <end position="643"/>
    </location>
</feature>
<feature type="compositionally biased region" description="Basic and acidic residues" evidence="6">
    <location>
        <begin position="668"/>
        <end position="700"/>
    </location>
</feature>
<feature type="modified residue" description="Phosphoserine" evidence="8">
    <location>
        <position position="107"/>
    </location>
</feature>
<feature type="modified residue" description="Phosphoserine" evidence="8">
    <location>
        <position position="111"/>
    </location>
</feature>
<feature type="modified residue" description="Phosphoserine" evidence="8">
    <location>
        <position position="261"/>
    </location>
</feature>
<feature type="modified residue" description="Phosphoserine" evidence="2">
    <location>
        <position position="263"/>
    </location>
</feature>
<feature type="modified residue" description="Phosphothreonine" evidence="2">
    <location>
        <position position="529"/>
    </location>
</feature>
<feature type="modified residue" description="Phosphoserine" evidence="2">
    <location>
        <position position="549"/>
    </location>
</feature>
<feature type="modified residue" description="Phosphoserine" evidence="2">
    <location>
        <position position="553"/>
    </location>
</feature>
<feature type="modified residue" description="Phosphoserine" evidence="2">
    <location>
        <position position="559"/>
    </location>
</feature>
<feature type="cross-link" description="Glycyl lysine isopeptide (Lys-Gly) (interchain with G-Cter in SUMO2)" evidence="2">
    <location>
        <position position="210"/>
    </location>
</feature>
<feature type="cross-link" description="Glycyl lysine isopeptide (Lys-Gly) (interchain with G-Cter in SUMO2)" evidence="2">
    <location>
        <position position="699"/>
    </location>
</feature>
<feature type="strand" evidence="9">
    <location>
        <begin position="416"/>
        <end position="419"/>
    </location>
</feature>
<feature type="helix" evidence="9">
    <location>
        <begin position="427"/>
        <end position="435"/>
    </location>
</feature>
<feature type="strand" evidence="9">
    <location>
        <begin position="440"/>
        <end position="445"/>
    </location>
</feature>
<feature type="strand" evidence="9">
    <location>
        <begin position="447"/>
        <end position="449"/>
    </location>
</feature>
<feature type="strand" evidence="9">
    <location>
        <begin position="452"/>
        <end position="458"/>
    </location>
</feature>
<feature type="helix" evidence="9">
    <location>
        <begin position="459"/>
        <end position="469"/>
    </location>
</feature>
<feature type="strand" evidence="9">
    <location>
        <begin position="475"/>
        <end position="478"/>
    </location>
</feature>
<feature type="strand" evidence="9">
    <location>
        <begin position="482"/>
        <end position="485"/>
    </location>
</feature>
<protein>
    <recommendedName>
        <fullName>Putative RNA-binding protein 15B</fullName>
    </recommendedName>
    <alternativeName>
        <fullName>RNA-binding motif protein 15B</fullName>
    </alternativeName>
</protein>
<organism>
    <name type="scientific">Mus musculus</name>
    <name type="common">Mouse</name>
    <dbReference type="NCBI Taxonomy" id="10090"/>
    <lineage>
        <taxon>Eukaryota</taxon>
        <taxon>Metazoa</taxon>
        <taxon>Chordata</taxon>
        <taxon>Craniata</taxon>
        <taxon>Vertebrata</taxon>
        <taxon>Euteleostomi</taxon>
        <taxon>Mammalia</taxon>
        <taxon>Eutheria</taxon>
        <taxon>Euarchontoglires</taxon>
        <taxon>Glires</taxon>
        <taxon>Rodentia</taxon>
        <taxon>Myomorpha</taxon>
        <taxon>Muroidea</taxon>
        <taxon>Muridae</taxon>
        <taxon>Murinae</taxon>
        <taxon>Mus</taxon>
        <taxon>Mus</taxon>
    </lineage>
</organism>
<evidence type="ECO:0000250" key="1"/>
<evidence type="ECO:0000250" key="2">
    <source>
        <dbReference type="UniProtKB" id="Q8NDT2"/>
    </source>
</evidence>
<evidence type="ECO:0000255" key="3"/>
<evidence type="ECO:0000255" key="4">
    <source>
        <dbReference type="PROSITE-ProRule" id="PRU00176"/>
    </source>
</evidence>
<evidence type="ECO:0000255" key="5">
    <source>
        <dbReference type="PROSITE-ProRule" id="PRU00249"/>
    </source>
</evidence>
<evidence type="ECO:0000256" key="6">
    <source>
        <dbReference type="SAM" id="MobiDB-lite"/>
    </source>
</evidence>
<evidence type="ECO:0000305" key="7"/>
<evidence type="ECO:0007744" key="8">
    <source>
    </source>
</evidence>
<evidence type="ECO:0007829" key="9">
    <source>
        <dbReference type="PDB" id="1WHY"/>
    </source>
</evidence>
<sequence length="887" mass="97076">MKRQSERDSSPSGRGSSSSAKRPREREREAEAGGRRAAHKASGGTKHPVPARARDKPRGSGGGGGHRDGRAAGDANHRASGGRSSGAPGGGGRTGKASGDPGAGGASPRASPLPPPPPPPGAEPAGPGSTAAPEYKTLLISSLSPALPAEHLEDRLFHQFKRFGEISLRLSHTPELGRVAYVNFRHPQDAREARQHALARQLLLYDRPLKVEPVYLRGGGSSRRSSSSSAAASTPPPGPPAPADPLGYLPLHGGYQYKQRSLSPVAAPPLREPRARHAAAAFALDAAAAAAVGLSRERALDYYGLYDDRGRPYGYQAVCEEDLMPEDDQRATRNLFIGNLDHSVSEVELRRAFEKYGIIEEVVIKRPARGQGGAYAFLKFQNLDMAHRAKVAMSGRVIGRNPIKIGYGKANPTTRLWVGGLGPNTSLAALAREFDRFGSIRTIDHVKGDSFAYIQYESLDAAQAACAKMRGFPLGGPDRRLRVDFAKAEETRYPQQYQPSPLPVHYELLTDGYTRHRNLDADLRVRDRTPPHLLYSDRDRTFLEGDWTSLSKSSDRRNSLEGYSRSVRSRSGERWGGDGDRSIAKPWEERRKRRSLSSDRGRTTHSPYEERSRTKGGGQQSERGSDRTPERSRKENHSSEGTKESGSNSLSNSRHGAEERSHHHHHHEAPDSSHGKKTRESERNHRTTEAEPKTLEEPKHETKKLKTLSEYAQTLQLGWNGLLVLKNSCFPTSMHILEGDQGVISGLLKDHPSGSKLTQLKIAQRLRLDQPKLDEVTRRIKQGSPNGYAVLLAIQSTPSGPGAEGMPVVEPGLQRRLLRNLVSYLKQKQAAGVISLPVGGSKGRDNTGMLYAFPPCDFSQQYLQSALRTLGKLEEEHMVIVIVRDTA</sequence>
<proteinExistence type="evidence at protein level"/>
<gene>
    <name type="primary">Rbm15b</name>
</gene>